<sequence length="108" mass="11945">MSQQKQKQCAPPQQCCPPPQQRCPPPQQCCPPPQQCCPPPQQCCPPPQQCCPPPQQCCPPPQQCCPPPQQYCPPPQQTKQPCQPPPKCQEPCAPKCPPPQQCQTSKQK</sequence>
<protein>
    <recommendedName>
        <fullName evidence="3">Small proline-rich protein 5</fullName>
    </recommendedName>
</protein>
<keyword id="KW-1267">Proteomics identification</keyword>
<keyword id="KW-1185">Reference proteome</keyword>
<accession>A0A1B0GTR4</accession>
<reference key="1">
    <citation type="journal article" date="2006" name="Nature">
        <title>The DNA sequence and biological annotation of human chromosome 1.</title>
        <authorList>
            <person name="Gregory S.G."/>
            <person name="Barlow K.F."/>
            <person name="McLay K.E."/>
            <person name="Kaul R."/>
            <person name="Swarbreck D."/>
            <person name="Dunham A."/>
            <person name="Scott C.E."/>
            <person name="Howe K.L."/>
            <person name="Woodfine K."/>
            <person name="Spencer C.C.A."/>
            <person name="Jones M.C."/>
            <person name="Gillson C."/>
            <person name="Searle S."/>
            <person name="Zhou Y."/>
            <person name="Kokocinski F."/>
            <person name="McDonald L."/>
            <person name="Evans R."/>
            <person name="Phillips K."/>
            <person name="Atkinson A."/>
            <person name="Cooper R."/>
            <person name="Jones C."/>
            <person name="Hall R.E."/>
            <person name="Andrews T.D."/>
            <person name="Lloyd C."/>
            <person name="Ainscough R."/>
            <person name="Almeida J.P."/>
            <person name="Ambrose K.D."/>
            <person name="Anderson F."/>
            <person name="Andrew R.W."/>
            <person name="Ashwell R.I.S."/>
            <person name="Aubin K."/>
            <person name="Babbage A.K."/>
            <person name="Bagguley C.L."/>
            <person name="Bailey J."/>
            <person name="Beasley H."/>
            <person name="Bethel G."/>
            <person name="Bird C.P."/>
            <person name="Bray-Allen S."/>
            <person name="Brown J.Y."/>
            <person name="Brown A.J."/>
            <person name="Buckley D."/>
            <person name="Burton J."/>
            <person name="Bye J."/>
            <person name="Carder C."/>
            <person name="Chapman J.C."/>
            <person name="Clark S.Y."/>
            <person name="Clarke G."/>
            <person name="Clee C."/>
            <person name="Cobley V."/>
            <person name="Collier R.E."/>
            <person name="Corby N."/>
            <person name="Coville G.J."/>
            <person name="Davies J."/>
            <person name="Deadman R."/>
            <person name="Dunn M."/>
            <person name="Earthrowl M."/>
            <person name="Ellington A.G."/>
            <person name="Errington H."/>
            <person name="Frankish A."/>
            <person name="Frankland J."/>
            <person name="French L."/>
            <person name="Garner P."/>
            <person name="Garnett J."/>
            <person name="Gay L."/>
            <person name="Ghori M.R.J."/>
            <person name="Gibson R."/>
            <person name="Gilby L.M."/>
            <person name="Gillett W."/>
            <person name="Glithero R.J."/>
            <person name="Grafham D.V."/>
            <person name="Griffiths C."/>
            <person name="Griffiths-Jones S."/>
            <person name="Grocock R."/>
            <person name="Hammond S."/>
            <person name="Harrison E.S.I."/>
            <person name="Hart E."/>
            <person name="Haugen E."/>
            <person name="Heath P.D."/>
            <person name="Holmes S."/>
            <person name="Holt K."/>
            <person name="Howden P.J."/>
            <person name="Hunt A.R."/>
            <person name="Hunt S.E."/>
            <person name="Hunter G."/>
            <person name="Isherwood J."/>
            <person name="James R."/>
            <person name="Johnson C."/>
            <person name="Johnson D."/>
            <person name="Joy A."/>
            <person name="Kay M."/>
            <person name="Kershaw J.K."/>
            <person name="Kibukawa M."/>
            <person name="Kimberley A.M."/>
            <person name="King A."/>
            <person name="Knights A.J."/>
            <person name="Lad H."/>
            <person name="Laird G."/>
            <person name="Lawlor S."/>
            <person name="Leongamornlert D.A."/>
            <person name="Lloyd D.M."/>
            <person name="Loveland J."/>
            <person name="Lovell J."/>
            <person name="Lush M.J."/>
            <person name="Lyne R."/>
            <person name="Martin S."/>
            <person name="Mashreghi-Mohammadi M."/>
            <person name="Matthews L."/>
            <person name="Matthews N.S.W."/>
            <person name="McLaren S."/>
            <person name="Milne S."/>
            <person name="Mistry S."/>
            <person name="Moore M.J.F."/>
            <person name="Nickerson T."/>
            <person name="O'Dell C.N."/>
            <person name="Oliver K."/>
            <person name="Palmeiri A."/>
            <person name="Palmer S.A."/>
            <person name="Parker A."/>
            <person name="Patel D."/>
            <person name="Pearce A.V."/>
            <person name="Peck A.I."/>
            <person name="Pelan S."/>
            <person name="Phelps K."/>
            <person name="Phillimore B.J."/>
            <person name="Plumb R."/>
            <person name="Rajan J."/>
            <person name="Raymond C."/>
            <person name="Rouse G."/>
            <person name="Saenphimmachak C."/>
            <person name="Sehra H.K."/>
            <person name="Sheridan E."/>
            <person name="Shownkeen R."/>
            <person name="Sims S."/>
            <person name="Skuce C.D."/>
            <person name="Smith M."/>
            <person name="Steward C."/>
            <person name="Subramanian S."/>
            <person name="Sycamore N."/>
            <person name="Tracey A."/>
            <person name="Tromans A."/>
            <person name="Van Helmond Z."/>
            <person name="Wall M."/>
            <person name="Wallis J.M."/>
            <person name="White S."/>
            <person name="Whitehead S.L."/>
            <person name="Wilkinson J.E."/>
            <person name="Willey D.L."/>
            <person name="Williams H."/>
            <person name="Wilming L."/>
            <person name="Wray P.W."/>
            <person name="Wu Z."/>
            <person name="Coulson A."/>
            <person name="Vaudin M."/>
            <person name="Sulston J.E."/>
            <person name="Durbin R.M."/>
            <person name="Hubbard T."/>
            <person name="Wooster R."/>
            <person name="Dunham I."/>
            <person name="Carter N.P."/>
            <person name="McVean G."/>
            <person name="Ross M.T."/>
            <person name="Harrow J."/>
            <person name="Olson M.V."/>
            <person name="Beck S."/>
            <person name="Rogers J."/>
            <person name="Bentley D.R."/>
        </authorList>
    </citation>
    <scope>NUCLEOTIDE SEQUENCE [LARGE SCALE GENOMIC DNA]</scope>
</reference>
<reference key="2">
    <citation type="journal article" date="2019" name="EMBO Rep.">
        <title>The long non-coding RNA LINC00941 and SPRR5 are novel regulators of human epidermal homeostasis.</title>
        <authorList>
            <person name="Ziegler C."/>
            <person name="Graf J."/>
            <person name="Faderl S."/>
            <person name="Schedlbauer J."/>
            <person name="Strieder N."/>
            <person name="Foerstl B."/>
            <person name="Spang R."/>
            <person name="Bruckmann A."/>
            <person name="Merkl R."/>
            <person name="Hombach S."/>
            <person name="Kretz M."/>
        </authorList>
    </citation>
    <scope>FUNCTION</scope>
    <scope>DEVELOPMENTAL STAGE</scope>
</reference>
<feature type="chain" id="PRO_0000441627" description="Small proline-rich protein 5">
    <location>
        <begin position="1"/>
        <end position="108"/>
    </location>
</feature>
<feature type="region of interest" description="Disordered" evidence="1">
    <location>
        <begin position="1"/>
        <end position="24"/>
    </location>
</feature>
<feature type="region of interest" description="Disordered" evidence="1">
    <location>
        <begin position="73"/>
        <end position="108"/>
    </location>
</feature>
<feature type="compositionally biased region" description="Low complexity" evidence="1">
    <location>
        <begin position="1"/>
        <end position="13"/>
    </location>
</feature>
<feature type="compositionally biased region" description="Pro residues" evidence="1">
    <location>
        <begin position="14"/>
        <end position="24"/>
    </location>
</feature>
<feature type="compositionally biased region" description="Pro residues" evidence="1">
    <location>
        <begin position="73"/>
        <end position="100"/>
    </location>
</feature>
<gene>
    <name evidence="4" type="primary">SPRR5</name>
</gene>
<proteinExistence type="evidence at protein level"/>
<dbReference type="EMBL" id="AL356867">
    <property type="status" value="NOT_ANNOTATED_CDS"/>
    <property type="molecule type" value="Genomic_DNA"/>
</dbReference>
<dbReference type="CCDS" id="CCDS91056.1"/>
<dbReference type="RefSeq" id="NP_001382364.1">
    <property type="nucleotide sequence ID" value="NM_001395435.1"/>
</dbReference>
<dbReference type="BioMuta" id="SPRR5"/>
<dbReference type="MassIVE" id="A0A1B0GTR4"/>
<dbReference type="PeptideAtlas" id="A0A1B0GTR4"/>
<dbReference type="Ensembl" id="ENST00000636302.2">
    <property type="protein sequence ID" value="ENSP00000489807.1"/>
    <property type="gene ID" value="ENSG00000283227.2"/>
</dbReference>
<dbReference type="GeneID" id="110806278"/>
<dbReference type="MANE-Select" id="ENST00000636302.2">
    <property type="protein sequence ID" value="ENSP00000489807.1"/>
    <property type="RefSeq nucleotide sequence ID" value="NM_001395435.1"/>
    <property type="RefSeq protein sequence ID" value="NP_001382364.1"/>
</dbReference>
<dbReference type="AGR" id="HGNC:53428"/>
<dbReference type="GeneCards" id="SPRR5"/>
<dbReference type="HGNC" id="HGNC:53428">
    <property type="gene designation" value="SPRR5"/>
</dbReference>
<dbReference type="HPA" id="ENSG00000283227">
    <property type="expression patterns" value="Tissue enriched (skin)"/>
</dbReference>
<dbReference type="neXtProt" id="NX_A0A1B0GTR4"/>
<dbReference type="VEuPathDB" id="HostDB:ENSG00000283227"/>
<dbReference type="GeneTree" id="ENSGT01130000278656"/>
<dbReference type="InParanoid" id="A0A1B0GTR4"/>
<dbReference type="OMA" id="QKQCAPP"/>
<dbReference type="PAN-GO" id="A0A1B0GTR4">
    <property type="GO annotations" value="0 GO annotations based on evolutionary models"/>
</dbReference>
<dbReference type="Pharos" id="A0A1B0GTR4">
    <property type="development level" value="Tdark"/>
</dbReference>
<dbReference type="Proteomes" id="UP000005640">
    <property type="component" value="Chromosome 1"/>
</dbReference>
<dbReference type="RNAct" id="A0A1B0GTR4">
    <property type="molecule type" value="protein"/>
</dbReference>
<dbReference type="Bgee" id="ENSG00000283227">
    <property type="expression patterns" value="Expressed in skin of leg and 40 other cell types or tissues"/>
</dbReference>
<dbReference type="GO" id="GO:0045618">
    <property type="term" value="P:positive regulation of keratinocyte differentiation"/>
    <property type="evidence" value="ECO:0000315"/>
    <property type="project" value="UniProtKB"/>
</dbReference>
<dbReference type="PRINTS" id="PR00021">
    <property type="entry name" value="PRORICH"/>
</dbReference>
<name>SPRR5_HUMAN</name>
<comment type="function">
    <text evidence="2">Positively regulates keratinocyte differentiation by inducing genes associated with epidermal differentiation.</text>
</comment>
<comment type="developmental stage">
    <text evidence="2">Barely detectable in non-differentiated primary keratinocytes. Upon onset of epidermal differentiation, abundance is strongly increased with highest levels at late differentiation stages.</text>
</comment>
<organism>
    <name type="scientific">Homo sapiens</name>
    <name type="common">Human</name>
    <dbReference type="NCBI Taxonomy" id="9606"/>
    <lineage>
        <taxon>Eukaryota</taxon>
        <taxon>Metazoa</taxon>
        <taxon>Chordata</taxon>
        <taxon>Craniata</taxon>
        <taxon>Vertebrata</taxon>
        <taxon>Euteleostomi</taxon>
        <taxon>Mammalia</taxon>
        <taxon>Eutheria</taxon>
        <taxon>Euarchontoglires</taxon>
        <taxon>Primates</taxon>
        <taxon>Haplorrhini</taxon>
        <taxon>Catarrhini</taxon>
        <taxon>Hominidae</taxon>
        <taxon>Homo</taxon>
    </lineage>
</organism>
<evidence type="ECO:0000256" key="1">
    <source>
        <dbReference type="SAM" id="MobiDB-lite"/>
    </source>
</evidence>
<evidence type="ECO:0000269" key="2">
    <source>
    </source>
</evidence>
<evidence type="ECO:0000305" key="3"/>
<evidence type="ECO:0000312" key="4">
    <source>
        <dbReference type="HGNC" id="HGNC:53428"/>
    </source>
</evidence>